<dbReference type="EMBL" id="AF031901">
    <property type="protein sequence ID" value="AAC29015.1"/>
    <property type="molecule type" value="Genomic_DNA"/>
</dbReference>
<dbReference type="EMBL" id="FJ230960">
    <property type="protein sequence ID" value="ACI90919.1"/>
    <property type="molecule type" value="Genomic_DNA"/>
</dbReference>
<dbReference type="RefSeq" id="YP_002300290.1">
    <property type="nucleotide sequence ID" value="NC_011421.1"/>
</dbReference>
<dbReference type="PDB" id="7BY7">
    <property type="method" value="NMR"/>
    <property type="chains" value="A=1-77"/>
</dbReference>
<dbReference type="PDBsum" id="7BY7"/>
<dbReference type="SMR" id="O48400"/>
<dbReference type="GeneID" id="7009003"/>
<dbReference type="KEGG" id="vg:7009003"/>
<dbReference type="Proteomes" id="UP000001590">
    <property type="component" value="Genome"/>
</dbReference>
<dbReference type="GO" id="GO:0042742">
    <property type="term" value="P:defense response to bacterium"/>
    <property type="evidence" value="ECO:0007669"/>
    <property type="project" value="UniProtKB-KW"/>
</dbReference>
<dbReference type="GO" id="GO:0051726">
    <property type="term" value="P:regulation of cell cycle"/>
    <property type="evidence" value="ECO:0007669"/>
    <property type="project" value="UniProtKB-KW"/>
</dbReference>
<comment type="function">
    <text evidence="1">Acts as a host growth inhibitor by inhibiting DNA-binding of microbial histone-like protein HU, thereby preventing chromosome segregation and causing filamentous cell morphology and growth defects in the host.</text>
</comment>
<comment type="subunit">
    <text evidence="1">Interacts with host homodimeric histone-like protein (HU) hupA; thereby replacing dsDNA from the HU-DNA complex.</text>
</comment>
<gene>
    <name evidence="5" type="primary">46</name>
    <name evidence="5" type="ORF">SPO1_14</name>
</gene>
<protein>
    <recommendedName>
        <fullName evidence="3">Inhibitor of histone-like protein HU</fullName>
    </recommendedName>
    <alternativeName>
        <fullName evidence="2">Gene 46 protein</fullName>
        <shortName evidence="2">Gp46</shortName>
    </alternativeName>
    <alternativeName>
        <fullName evidence="3">Gene product 46</fullName>
    </alternativeName>
</protein>
<reference evidence="4" key="1">
    <citation type="journal article" date="1998" name="Virology">
        <title>Genes and regulatory sites of the 'host-takeover module' in the terminal redundancy of Bacillus subtilis bacteriophage SPO1.</title>
        <authorList>
            <person name="Stewart C.R."/>
            <person name="Gaslightwala I."/>
            <person name="Hinata K."/>
            <person name="Krolikowski K.A."/>
            <person name="Needleman D.S."/>
            <person name="Peng A.S.-Y."/>
            <person name="Peterman M.A."/>
            <person name="Tobias A."/>
            <person name="Wei P."/>
        </authorList>
    </citation>
    <scope>NUCLEOTIDE SEQUENCE [GENOMIC DNA]</scope>
</reference>
<reference evidence="5" key="2">
    <citation type="journal article" date="2009" name="J. Mol. Biol.">
        <title>The genome of Bacillus subtilis bacteriophage SPO1.</title>
        <authorList>
            <person name="Stewart C.R."/>
            <person name="Casjens S.R."/>
            <person name="Cresawn S.G."/>
            <person name="Houtz J.M."/>
            <person name="Smith A.L."/>
            <person name="Ford M.E."/>
            <person name="Peebles C.L."/>
            <person name="Hatfull G.F."/>
            <person name="Hendrix R.W."/>
            <person name="Huang W.M."/>
            <person name="Pedulla M.L."/>
        </authorList>
    </citation>
    <scope>NUCLEOTIDE SEQUENCE [LARGE SCALE GENOMIC DNA]</scope>
</reference>
<reference evidence="7" key="3">
    <citation type="journal article" date="2022" name="Proc. Natl. Acad. Sci. U.S.A.">
        <title>Bacteriophage protein Gp46 is a cross-species inhibitor of nucleoid-associated HU proteins.</title>
        <authorList>
            <person name="Zhang P."/>
            <person name="Zhao X."/>
            <person name="Wang Y."/>
            <person name="Du K."/>
            <person name="Wang Z."/>
            <person name="Yu J."/>
            <person name="Chang G."/>
            <person name="Matthews S."/>
            <person name="Wang H."/>
            <person name="Liu B."/>
        </authorList>
    </citation>
    <scope>STRUCTURE BY NMR</scope>
    <scope>FUNCTION</scope>
    <scope>INTERACTION WITH B.SUBTILIS HUPA</scope>
    <scope>MUTAGENESIS OF PHE-22 AND ASP-63</scope>
</reference>
<name>GP46_BPSP1</name>
<feature type="chain" id="PRO_0000106152" description="Inhibitor of histone-like protein HU">
    <location>
        <begin position="1"/>
        <end position="77"/>
    </location>
</feature>
<feature type="mutagenesis site" description="Disrupts interaction with B.subtilis hupA. Reduces host cell filamentation, nucleoid deformation and inhibition of cell growth. No impact on B.subtilis growth rate and morphology; when associated with Asn-63." evidence="1">
    <original>F</original>
    <variation>A</variation>
    <location>
        <position position="22"/>
    </location>
</feature>
<feature type="mutagenesis site" description="Weakens interaction with B.subtilis hupA. Reduces host cell filamentation, nucleoid deformation and inhibition of cell growth. No impact on B.subtilis growth rate and morphology; when associated with Ala-22." evidence="1">
    <original>D</original>
    <variation>N</variation>
    <location>
        <position position="63"/>
    </location>
</feature>
<feature type="mutagenesis site" description="Abrogates tertiary structure folding." evidence="1">
    <original>D</original>
    <variation>R</variation>
    <location>
        <position position="63"/>
    </location>
</feature>
<feature type="helix" evidence="8">
    <location>
        <begin position="6"/>
        <end position="9"/>
    </location>
</feature>
<feature type="helix" evidence="8">
    <location>
        <begin position="10"/>
        <end position="16"/>
    </location>
</feature>
<feature type="helix" evidence="8">
    <location>
        <begin position="17"/>
        <end position="19"/>
    </location>
</feature>
<feature type="strand" evidence="8">
    <location>
        <begin position="26"/>
        <end position="29"/>
    </location>
</feature>
<feature type="helix" evidence="8">
    <location>
        <begin position="36"/>
        <end position="41"/>
    </location>
</feature>
<feature type="helix" evidence="8">
    <location>
        <begin position="46"/>
        <end position="48"/>
    </location>
</feature>
<feature type="helix" evidence="8">
    <location>
        <begin position="49"/>
        <end position="52"/>
    </location>
</feature>
<feature type="strand" evidence="8">
    <location>
        <begin position="53"/>
        <end position="55"/>
    </location>
</feature>
<feature type="strand" evidence="8">
    <location>
        <begin position="58"/>
        <end position="60"/>
    </location>
</feature>
<feature type="helix" evidence="8">
    <location>
        <begin position="61"/>
        <end position="64"/>
    </location>
</feature>
<feature type="turn" evidence="8">
    <location>
        <begin position="67"/>
        <end position="72"/>
    </location>
</feature>
<sequence>MMTEDQKFKYLTKIEELEAGCFSDWTKEDITGDLKYLKKGIIEESIELIRAVNGLTYSEELHDFTQEIIEELDISPL</sequence>
<accession>O48400</accession>
<accession>B6V2I6</accession>
<proteinExistence type="evidence at protein level"/>
<organism evidence="6">
    <name type="scientific">Bacillus phage SP01</name>
    <name type="common">Bacteriophage SP01</name>
    <dbReference type="NCBI Taxonomy" id="2884427"/>
    <lineage>
        <taxon>Viruses</taxon>
        <taxon>Duplodnaviria</taxon>
        <taxon>Heunggongvirae</taxon>
        <taxon>Uroviricota</taxon>
        <taxon>Caudoviricetes</taxon>
        <taxon>Herelleviridae</taxon>
        <taxon>Spounavirinae</taxon>
        <taxon>Okubovirus</taxon>
        <taxon>Okubovirus SPO1</taxon>
    </lineage>
</organism>
<keyword id="KW-0002">3D-structure</keyword>
<keyword id="KW-0044">Antibiotic</keyword>
<keyword id="KW-0929">Antimicrobial</keyword>
<keyword id="KW-0131">Cell cycle</keyword>
<keyword id="KW-0338">Growth arrest</keyword>
<keyword id="KW-0945">Host-virus interaction</keyword>
<keyword id="KW-1185">Reference proteome</keyword>
<evidence type="ECO:0000269" key="1">
    <source>
    </source>
</evidence>
<evidence type="ECO:0000303" key="2">
    <source>
    </source>
</evidence>
<evidence type="ECO:0000305" key="3"/>
<evidence type="ECO:0000312" key="4">
    <source>
        <dbReference type="EMBL" id="AAC29015.1"/>
    </source>
</evidence>
<evidence type="ECO:0000312" key="5">
    <source>
        <dbReference type="EMBL" id="ACI90919.1"/>
    </source>
</evidence>
<evidence type="ECO:0000312" key="6">
    <source>
        <dbReference type="Proteomes" id="UP000001590"/>
    </source>
</evidence>
<evidence type="ECO:0007744" key="7">
    <source>
        <dbReference type="PDB" id="7BY7"/>
    </source>
</evidence>
<evidence type="ECO:0007829" key="8">
    <source>
        <dbReference type="PDB" id="7BY7"/>
    </source>
</evidence>
<organismHost>
    <name type="scientific">Bacillus subtilis</name>
    <dbReference type="NCBI Taxonomy" id="1423"/>
</organismHost>